<gene>
    <name type="ordered locus">Os07g0103200</name>
    <name type="ordered locus">LOC_Os07g01320</name>
    <name type="ORF">OsJ_22784</name>
    <name type="ORF">P0446F04.109</name>
</gene>
<feature type="chain" id="PRO_0000391871" description="DDRGK domain-containing protein 1">
    <location>
        <begin position="1"/>
        <end position="302"/>
    </location>
</feature>
<feature type="topological domain" description="Lumenal" evidence="4">
    <location>
        <begin position="1"/>
        <end position="5"/>
    </location>
</feature>
<feature type="transmembrane region" description="Helical" evidence="2">
    <location>
        <begin position="6"/>
        <end position="26"/>
    </location>
</feature>
<feature type="topological domain" description="Cytoplasmic" evidence="4">
    <location>
        <begin position="27"/>
        <end position="302"/>
    </location>
</feature>
<feature type="region of interest" description="Disordered" evidence="3">
    <location>
        <begin position="36"/>
        <end position="151"/>
    </location>
</feature>
<feature type="region of interest" description="Disordered" evidence="3">
    <location>
        <begin position="279"/>
        <end position="302"/>
    </location>
</feature>
<feature type="compositionally biased region" description="Acidic residues" evidence="3">
    <location>
        <begin position="79"/>
        <end position="91"/>
    </location>
</feature>
<feature type="compositionally biased region" description="Basic and acidic residues" evidence="3">
    <location>
        <begin position="103"/>
        <end position="151"/>
    </location>
</feature>
<name>DDRGK_ORYSJ</name>
<reference key="1">
    <citation type="journal article" date="2005" name="Nature">
        <title>The map-based sequence of the rice genome.</title>
        <authorList>
            <consortium name="International rice genome sequencing project (IRGSP)"/>
        </authorList>
    </citation>
    <scope>NUCLEOTIDE SEQUENCE [LARGE SCALE GENOMIC DNA]</scope>
    <source>
        <strain>cv. Nipponbare</strain>
    </source>
</reference>
<reference key="2">
    <citation type="journal article" date="2013" name="Rice">
        <title>Improvement of the Oryza sativa Nipponbare reference genome using next generation sequence and optical map data.</title>
        <authorList>
            <person name="Kawahara Y."/>
            <person name="de la Bastide M."/>
            <person name="Hamilton J.P."/>
            <person name="Kanamori H."/>
            <person name="McCombie W.R."/>
            <person name="Ouyang S."/>
            <person name="Schwartz D.C."/>
            <person name="Tanaka T."/>
            <person name="Wu J."/>
            <person name="Zhou S."/>
            <person name="Childs K.L."/>
            <person name="Davidson R.M."/>
            <person name="Lin H."/>
            <person name="Quesada-Ocampo L."/>
            <person name="Vaillancourt B."/>
            <person name="Sakai H."/>
            <person name="Lee S.S."/>
            <person name="Kim J."/>
            <person name="Numa H."/>
            <person name="Itoh T."/>
            <person name="Buell C.R."/>
            <person name="Matsumoto T."/>
        </authorList>
    </citation>
    <scope>GENOME REANNOTATION</scope>
    <source>
        <strain>cv. Nipponbare</strain>
    </source>
</reference>
<reference key="3">
    <citation type="journal article" date="2005" name="PLoS Biol.">
        <title>The genomes of Oryza sativa: a history of duplications.</title>
        <authorList>
            <person name="Yu J."/>
            <person name="Wang J."/>
            <person name="Lin W."/>
            <person name="Li S."/>
            <person name="Li H."/>
            <person name="Zhou J."/>
            <person name="Ni P."/>
            <person name="Dong W."/>
            <person name="Hu S."/>
            <person name="Zeng C."/>
            <person name="Zhang J."/>
            <person name="Zhang Y."/>
            <person name="Li R."/>
            <person name="Xu Z."/>
            <person name="Li S."/>
            <person name="Li X."/>
            <person name="Zheng H."/>
            <person name="Cong L."/>
            <person name="Lin L."/>
            <person name="Yin J."/>
            <person name="Geng J."/>
            <person name="Li G."/>
            <person name="Shi J."/>
            <person name="Liu J."/>
            <person name="Lv H."/>
            <person name="Li J."/>
            <person name="Wang J."/>
            <person name="Deng Y."/>
            <person name="Ran L."/>
            <person name="Shi X."/>
            <person name="Wang X."/>
            <person name="Wu Q."/>
            <person name="Li C."/>
            <person name="Ren X."/>
            <person name="Wang J."/>
            <person name="Wang X."/>
            <person name="Li D."/>
            <person name="Liu D."/>
            <person name="Zhang X."/>
            <person name="Ji Z."/>
            <person name="Zhao W."/>
            <person name="Sun Y."/>
            <person name="Zhang Z."/>
            <person name="Bao J."/>
            <person name="Han Y."/>
            <person name="Dong L."/>
            <person name="Ji J."/>
            <person name="Chen P."/>
            <person name="Wu S."/>
            <person name="Liu J."/>
            <person name="Xiao Y."/>
            <person name="Bu D."/>
            <person name="Tan J."/>
            <person name="Yang L."/>
            <person name="Ye C."/>
            <person name="Zhang J."/>
            <person name="Xu J."/>
            <person name="Zhou Y."/>
            <person name="Yu Y."/>
            <person name="Zhang B."/>
            <person name="Zhuang S."/>
            <person name="Wei H."/>
            <person name="Liu B."/>
            <person name="Lei M."/>
            <person name="Yu H."/>
            <person name="Li Y."/>
            <person name="Xu H."/>
            <person name="Wei S."/>
            <person name="He X."/>
            <person name="Fang L."/>
            <person name="Zhang Z."/>
            <person name="Zhang Y."/>
            <person name="Huang X."/>
            <person name="Su Z."/>
            <person name="Tong W."/>
            <person name="Li J."/>
            <person name="Tong Z."/>
            <person name="Li S."/>
            <person name="Ye J."/>
            <person name="Wang L."/>
            <person name="Fang L."/>
            <person name="Lei T."/>
            <person name="Chen C.-S."/>
            <person name="Chen H.-C."/>
            <person name="Xu Z."/>
            <person name="Li H."/>
            <person name="Huang H."/>
            <person name="Zhang F."/>
            <person name="Xu H."/>
            <person name="Li N."/>
            <person name="Zhao C."/>
            <person name="Li S."/>
            <person name="Dong L."/>
            <person name="Huang Y."/>
            <person name="Li L."/>
            <person name="Xi Y."/>
            <person name="Qi Q."/>
            <person name="Li W."/>
            <person name="Zhang B."/>
            <person name="Hu W."/>
            <person name="Zhang Y."/>
            <person name="Tian X."/>
            <person name="Jiao Y."/>
            <person name="Liang X."/>
            <person name="Jin J."/>
            <person name="Gao L."/>
            <person name="Zheng W."/>
            <person name="Hao B."/>
            <person name="Liu S.-M."/>
            <person name="Wang W."/>
            <person name="Yuan L."/>
            <person name="Cao M."/>
            <person name="McDermott J."/>
            <person name="Samudrala R."/>
            <person name="Wang J."/>
            <person name="Wong G.K.-S."/>
            <person name="Yang H."/>
        </authorList>
    </citation>
    <scope>NUCLEOTIDE SEQUENCE [LARGE SCALE GENOMIC DNA]</scope>
    <source>
        <strain>cv. Nipponbare</strain>
    </source>
</reference>
<reference key="4">
    <citation type="submission" date="2008-11" db="EMBL/GenBank/DDBJ databases">
        <title>Oryza sativa full length cDNA.</title>
        <authorList>
            <consortium name="The rice full-length cDNA consortium"/>
        </authorList>
    </citation>
    <scope>NUCLEOTIDE SEQUENCE [LARGE SCALE MRNA]</scope>
    <source>
        <strain>cv. Nipponbare</strain>
    </source>
</reference>
<keyword id="KW-0256">Endoplasmic reticulum</keyword>
<keyword id="KW-0472">Membrane</keyword>
<keyword id="KW-1185">Reference proteome</keyword>
<keyword id="KW-0812">Transmembrane</keyword>
<keyword id="KW-1133">Transmembrane helix</keyword>
<keyword id="KW-0833">Ubl conjugation pathway</keyword>
<evidence type="ECO:0000250" key="1">
    <source>
        <dbReference type="UniProtKB" id="Q96HY6"/>
    </source>
</evidence>
<evidence type="ECO:0000255" key="2"/>
<evidence type="ECO:0000256" key="3">
    <source>
        <dbReference type="SAM" id="MobiDB-lite"/>
    </source>
</evidence>
<evidence type="ECO:0000305" key="4"/>
<sequence>MDGGGGMLGAVVCLLLVFAIFPLLLWRRRSDAAHRLPPQPLQDERVLRGGPAPGPAARRMRRRPLSTSADASTSRDRDVDDADSDLEEEIQDVPRGSKKKEKKRQDREAQRQAEEAARDSRRTKQDRYAEMRRKKDEEREAQERLMEEEARARKAKEEEAAALEFEKWKGAFSVDAEGTTESDTQDDGQGLLHNFVEYIKNQKCVPLEDLAAEFRMRTQDCINRIITLEGMDRLSGVMDDRGKFIYISTEEMKAVADYIRKQGRVSISHLASNSNQFIDLEPKPQYNEESNLDENAAAGTEL</sequence>
<accession>Q8LH03</accession>
<accession>A0A0P0X1L7</accession>
<accession>B9FV42</accession>
<comment type="function">
    <text evidence="1">Substrate adapter for ufmylation, the covalent attachment of the ubiquitin-like modifier UFM1 to substrate proteins.</text>
</comment>
<comment type="subcellular location">
    <subcellularLocation>
        <location evidence="1">Endoplasmic reticulum membrane</location>
        <topology evidence="1">Single-pass membrane protein</topology>
    </subcellularLocation>
</comment>
<comment type="similarity">
    <text evidence="4">Belongs to the DDRGK1 family.</text>
</comment>
<comment type="sequence caution" evidence="4">
    <conflict type="erroneous initiation">
        <sequence resource="EMBL-CDS" id="EEE66429"/>
    </conflict>
</comment>
<proteinExistence type="evidence at transcript level"/>
<protein>
    <recommendedName>
        <fullName>DDRGK domain-containing protein 1</fullName>
    </recommendedName>
</protein>
<dbReference type="EMBL" id="AP005187">
    <property type="protein sequence ID" value="BAC10394.1"/>
    <property type="molecule type" value="Genomic_DNA"/>
</dbReference>
<dbReference type="EMBL" id="AP014963">
    <property type="protein sequence ID" value="BAS99695.1"/>
    <property type="molecule type" value="Genomic_DNA"/>
</dbReference>
<dbReference type="EMBL" id="CM000144">
    <property type="protein sequence ID" value="EEE66429.1"/>
    <property type="status" value="ALT_INIT"/>
    <property type="molecule type" value="Genomic_DNA"/>
</dbReference>
<dbReference type="EMBL" id="AK318605">
    <property type="status" value="NOT_ANNOTATED_CDS"/>
    <property type="molecule type" value="mRNA"/>
</dbReference>
<dbReference type="RefSeq" id="XP_015646998.1">
    <property type="nucleotide sequence ID" value="XM_015791512.1"/>
</dbReference>
<dbReference type="SMR" id="Q8LH03"/>
<dbReference type="FunCoup" id="Q8LH03">
    <property type="interactions" value="348"/>
</dbReference>
<dbReference type="STRING" id="39947.Q8LH03"/>
<dbReference type="PaxDb" id="39947-Q8LH03"/>
<dbReference type="EnsemblPlants" id="Os07t0103200-01">
    <property type="protein sequence ID" value="Os07t0103200-01"/>
    <property type="gene ID" value="Os07g0103200"/>
</dbReference>
<dbReference type="Gramene" id="Os07t0103200-01">
    <property type="protein sequence ID" value="Os07t0103200-01"/>
    <property type="gene ID" value="Os07g0103200"/>
</dbReference>
<dbReference type="eggNOG" id="KOG3054">
    <property type="taxonomic scope" value="Eukaryota"/>
</dbReference>
<dbReference type="HOGENOM" id="CLU_059562_2_0_1"/>
<dbReference type="InParanoid" id="Q8LH03"/>
<dbReference type="OMA" id="VEHGNKV"/>
<dbReference type="OrthoDB" id="2285710at2759"/>
<dbReference type="Proteomes" id="UP000000763">
    <property type="component" value="Chromosome 7"/>
</dbReference>
<dbReference type="Proteomes" id="UP000007752">
    <property type="component" value="Chromosome 7"/>
</dbReference>
<dbReference type="Proteomes" id="UP000059680">
    <property type="component" value="Chromosome 7"/>
</dbReference>
<dbReference type="GO" id="GO:0005789">
    <property type="term" value="C:endoplasmic reticulum membrane"/>
    <property type="evidence" value="ECO:0007669"/>
    <property type="project" value="UniProtKB-SubCell"/>
</dbReference>
<dbReference type="GO" id="GO:0044389">
    <property type="term" value="F:ubiquitin-like protein ligase binding"/>
    <property type="evidence" value="ECO:0000318"/>
    <property type="project" value="GO_Central"/>
</dbReference>
<dbReference type="FunFam" id="1.10.10.10:FF:000143">
    <property type="entry name" value="DDRGK domain-containing protein 1"/>
    <property type="match status" value="1"/>
</dbReference>
<dbReference type="Gene3D" id="1.10.10.10">
    <property type="entry name" value="Winged helix-like DNA-binding domain superfamily/Winged helix DNA-binding domain"/>
    <property type="match status" value="1"/>
</dbReference>
<dbReference type="InterPro" id="IPR019153">
    <property type="entry name" value="DDRGK_dom-contain"/>
</dbReference>
<dbReference type="InterPro" id="IPR050899">
    <property type="entry name" value="DDRGK_domain-containing"/>
</dbReference>
<dbReference type="InterPro" id="IPR036388">
    <property type="entry name" value="WH-like_DNA-bd_sf"/>
</dbReference>
<dbReference type="InterPro" id="IPR036390">
    <property type="entry name" value="WH_DNA-bd_sf"/>
</dbReference>
<dbReference type="PANTHER" id="PTHR48176">
    <property type="entry name" value="DDRGK DOMAIN-CONTAINING PROTEIN 1"/>
    <property type="match status" value="1"/>
</dbReference>
<dbReference type="PANTHER" id="PTHR48176:SF1">
    <property type="entry name" value="DDRGK DOMAIN-CONTAINING PROTEIN 1"/>
    <property type="match status" value="1"/>
</dbReference>
<dbReference type="Pfam" id="PF09756">
    <property type="entry name" value="DDRGK"/>
    <property type="match status" value="1"/>
</dbReference>
<dbReference type="SMART" id="SM01128">
    <property type="entry name" value="DDRGK"/>
    <property type="match status" value="1"/>
</dbReference>
<dbReference type="SUPFAM" id="SSF46785">
    <property type="entry name" value="Winged helix' DNA-binding domain"/>
    <property type="match status" value="1"/>
</dbReference>
<organism>
    <name type="scientific">Oryza sativa subsp. japonica</name>
    <name type="common">Rice</name>
    <dbReference type="NCBI Taxonomy" id="39947"/>
    <lineage>
        <taxon>Eukaryota</taxon>
        <taxon>Viridiplantae</taxon>
        <taxon>Streptophyta</taxon>
        <taxon>Embryophyta</taxon>
        <taxon>Tracheophyta</taxon>
        <taxon>Spermatophyta</taxon>
        <taxon>Magnoliopsida</taxon>
        <taxon>Liliopsida</taxon>
        <taxon>Poales</taxon>
        <taxon>Poaceae</taxon>
        <taxon>BOP clade</taxon>
        <taxon>Oryzoideae</taxon>
        <taxon>Oryzeae</taxon>
        <taxon>Oryzinae</taxon>
        <taxon>Oryza</taxon>
        <taxon>Oryza sativa</taxon>
    </lineage>
</organism>